<proteinExistence type="inferred from homology"/>
<name>CLPP1_NOSS1</name>
<feature type="chain" id="PRO_0000179478" description="ATP-dependent Clp protease proteolytic subunit 1">
    <location>
        <begin position="1"/>
        <end position="204"/>
    </location>
</feature>
<feature type="active site" description="Nucleophile" evidence="1">
    <location>
        <position position="97"/>
    </location>
</feature>
<feature type="active site" evidence="1">
    <location>
        <position position="122"/>
    </location>
</feature>
<accession>Q8YXH5</accession>
<sequence>MTIPIVIEQSGRGERAFDIYSRLLRERIVFLGQQVDSNLANLIVAQLLFLDAEDPEKDIYLYINSPGGSVTAGMGIFDTMKHIRPDVCTICTGLAASMGAFLLSAGAKGKRMSLPHSRIMIHQPLGGAQGQATDIEIQAREILYHKRRLNDYLAEHTGQPIERIAEDTERDFFMSPDEAKDYGLIDQVIDRHAAGSRPVAMVGQ</sequence>
<protein>
    <recommendedName>
        <fullName evidence="1">ATP-dependent Clp protease proteolytic subunit 1</fullName>
        <ecNumber evidence="1">3.4.21.92</ecNumber>
    </recommendedName>
    <alternativeName>
        <fullName evidence="1">Endopeptidase Clp 1</fullName>
    </alternativeName>
</protein>
<comment type="function">
    <text evidence="1">Cleaves peptides in various proteins in a process that requires ATP hydrolysis. Has a chymotrypsin-like activity. Plays a major role in the degradation of misfolded proteins.</text>
</comment>
<comment type="catalytic activity">
    <reaction evidence="1">
        <text>Hydrolysis of proteins to small peptides in the presence of ATP and magnesium. alpha-casein is the usual test substrate. In the absence of ATP, only oligopeptides shorter than five residues are hydrolyzed (such as succinyl-Leu-Tyr-|-NHMec, and Leu-Tyr-Leu-|-Tyr-Trp, in which cleavage of the -Tyr-|-Leu- and -Tyr-|-Trp bonds also occurs).</text>
        <dbReference type="EC" id="3.4.21.92"/>
    </reaction>
</comment>
<comment type="subunit">
    <text evidence="1">Fourteen ClpP subunits assemble into 2 heptameric rings which stack back to back to give a disk-like structure with a central cavity, resembling the structure of eukaryotic proteasomes.</text>
</comment>
<comment type="subcellular location">
    <subcellularLocation>
        <location evidence="1">Cytoplasm</location>
    </subcellularLocation>
</comment>
<comment type="similarity">
    <text evidence="1">Belongs to the peptidase S14 family.</text>
</comment>
<keyword id="KW-0963">Cytoplasm</keyword>
<keyword id="KW-0378">Hydrolase</keyword>
<keyword id="KW-0645">Protease</keyword>
<keyword id="KW-1185">Reference proteome</keyword>
<keyword id="KW-0720">Serine protease</keyword>
<gene>
    <name evidence="1" type="primary">clpP1</name>
    <name type="ordered locus">alr1238</name>
</gene>
<reference key="1">
    <citation type="journal article" date="2001" name="DNA Res.">
        <title>Complete genomic sequence of the filamentous nitrogen-fixing cyanobacterium Anabaena sp. strain PCC 7120.</title>
        <authorList>
            <person name="Kaneko T."/>
            <person name="Nakamura Y."/>
            <person name="Wolk C.P."/>
            <person name="Kuritz T."/>
            <person name="Sasamoto S."/>
            <person name="Watanabe A."/>
            <person name="Iriguchi M."/>
            <person name="Ishikawa A."/>
            <person name="Kawashima K."/>
            <person name="Kimura T."/>
            <person name="Kishida Y."/>
            <person name="Kohara M."/>
            <person name="Matsumoto M."/>
            <person name="Matsuno A."/>
            <person name="Muraki A."/>
            <person name="Nakazaki N."/>
            <person name="Shimpo S."/>
            <person name="Sugimoto M."/>
            <person name="Takazawa M."/>
            <person name="Yamada M."/>
            <person name="Yasuda M."/>
            <person name="Tabata S."/>
        </authorList>
    </citation>
    <scope>NUCLEOTIDE SEQUENCE [LARGE SCALE GENOMIC DNA]</scope>
    <source>
        <strain>PCC 7120 / SAG 25.82 / UTEX 2576</strain>
    </source>
</reference>
<organism>
    <name type="scientific">Nostoc sp. (strain PCC 7120 / SAG 25.82 / UTEX 2576)</name>
    <dbReference type="NCBI Taxonomy" id="103690"/>
    <lineage>
        <taxon>Bacteria</taxon>
        <taxon>Bacillati</taxon>
        <taxon>Cyanobacteriota</taxon>
        <taxon>Cyanophyceae</taxon>
        <taxon>Nostocales</taxon>
        <taxon>Nostocaceae</taxon>
        <taxon>Nostoc</taxon>
    </lineage>
</organism>
<dbReference type="EC" id="3.4.21.92" evidence="1"/>
<dbReference type="EMBL" id="BA000019">
    <property type="protein sequence ID" value="BAB73195.1"/>
    <property type="molecule type" value="Genomic_DNA"/>
</dbReference>
<dbReference type="PIR" id="AC1961">
    <property type="entry name" value="AC1961"/>
</dbReference>
<dbReference type="SMR" id="Q8YXH5"/>
<dbReference type="STRING" id="103690.gene:10493252"/>
<dbReference type="MEROPS" id="S14.001"/>
<dbReference type="KEGG" id="ana:alr1238"/>
<dbReference type="eggNOG" id="COG0740">
    <property type="taxonomic scope" value="Bacteria"/>
</dbReference>
<dbReference type="OrthoDB" id="510061at2"/>
<dbReference type="Proteomes" id="UP000002483">
    <property type="component" value="Chromosome"/>
</dbReference>
<dbReference type="GO" id="GO:0005737">
    <property type="term" value="C:cytoplasm"/>
    <property type="evidence" value="ECO:0007669"/>
    <property type="project" value="UniProtKB-SubCell"/>
</dbReference>
<dbReference type="GO" id="GO:0009368">
    <property type="term" value="C:endopeptidase Clp complex"/>
    <property type="evidence" value="ECO:0007669"/>
    <property type="project" value="TreeGrafter"/>
</dbReference>
<dbReference type="GO" id="GO:0004176">
    <property type="term" value="F:ATP-dependent peptidase activity"/>
    <property type="evidence" value="ECO:0007669"/>
    <property type="project" value="InterPro"/>
</dbReference>
<dbReference type="GO" id="GO:0051117">
    <property type="term" value="F:ATPase binding"/>
    <property type="evidence" value="ECO:0007669"/>
    <property type="project" value="TreeGrafter"/>
</dbReference>
<dbReference type="GO" id="GO:0004252">
    <property type="term" value="F:serine-type endopeptidase activity"/>
    <property type="evidence" value="ECO:0007669"/>
    <property type="project" value="UniProtKB-UniRule"/>
</dbReference>
<dbReference type="GO" id="GO:0006515">
    <property type="term" value="P:protein quality control for misfolded or incompletely synthesized proteins"/>
    <property type="evidence" value="ECO:0007669"/>
    <property type="project" value="TreeGrafter"/>
</dbReference>
<dbReference type="CDD" id="cd07017">
    <property type="entry name" value="S14_ClpP_2"/>
    <property type="match status" value="1"/>
</dbReference>
<dbReference type="FunFam" id="3.90.226.10:FF:000001">
    <property type="entry name" value="ATP-dependent Clp protease proteolytic subunit"/>
    <property type="match status" value="1"/>
</dbReference>
<dbReference type="Gene3D" id="3.90.226.10">
    <property type="entry name" value="2-enoyl-CoA Hydratase, Chain A, domain 1"/>
    <property type="match status" value="1"/>
</dbReference>
<dbReference type="HAMAP" id="MF_00444">
    <property type="entry name" value="ClpP"/>
    <property type="match status" value="1"/>
</dbReference>
<dbReference type="InterPro" id="IPR001907">
    <property type="entry name" value="ClpP"/>
</dbReference>
<dbReference type="InterPro" id="IPR029045">
    <property type="entry name" value="ClpP/crotonase-like_dom_sf"/>
</dbReference>
<dbReference type="InterPro" id="IPR023562">
    <property type="entry name" value="ClpP/TepA"/>
</dbReference>
<dbReference type="InterPro" id="IPR033135">
    <property type="entry name" value="ClpP_His_AS"/>
</dbReference>
<dbReference type="NCBIfam" id="TIGR00493">
    <property type="entry name" value="clpP"/>
    <property type="match status" value="1"/>
</dbReference>
<dbReference type="NCBIfam" id="NF001368">
    <property type="entry name" value="PRK00277.1"/>
    <property type="match status" value="1"/>
</dbReference>
<dbReference type="NCBIfam" id="NF009205">
    <property type="entry name" value="PRK12553.1"/>
    <property type="match status" value="1"/>
</dbReference>
<dbReference type="PANTHER" id="PTHR10381">
    <property type="entry name" value="ATP-DEPENDENT CLP PROTEASE PROTEOLYTIC SUBUNIT"/>
    <property type="match status" value="1"/>
</dbReference>
<dbReference type="PANTHER" id="PTHR10381:SF70">
    <property type="entry name" value="ATP-DEPENDENT CLP PROTEASE PROTEOLYTIC SUBUNIT"/>
    <property type="match status" value="1"/>
</dbReference>
<dbReference type="Pfam" id="PF00574">
    <property type="entry name" value="CLP_protease"/>
    <property type="match status" value="1"/>
</dbReference>
<dbReference type="PRINTS" id="PR00127">
    <property type="entry name" value="CLPPROTEASEP"/>
</dbReference>
<dbReference type="SUPFAM" id="SSF52096">
    <property type="entry name" value="ClpP/crotonase"/>
    <property type="match status" value="1"/>
</dbReference>
<dbReference type="PROSITE" id="PS00382">
    <property type="entry name" value="CLP_PROTEASE_HIS"/>
    <property type="match status" value="1"/>
</dbReference>
<evidence type="ECO:0000255" key="1">
    <source>
        <dbReference type="HAMAP-Rule" id="MF_00444"/>
    </source>
</evidence>